<comment type="function">
    <text evidence="1">Participates in transcription elongation, termination and antitermination.</text>
</comment>
<comment type="similarity">
    <text evidence="1">Belongs to the NusG family.</text>
</comment>
<comment type="sequence caution" evidence="2">
    <conflict type="erroneous initiation">
        <sequence resource="EMBL-CDS" id="AAA27500"/>
    </conflict>
</comment>
<sequence length="184" mass="20449">MSIEWYAVHTLVGQEEKAKANLEKRIKAFGLQDKIFQVLIPTEEVVELREGGKKEVVRKKLFPGYLFIQMDLGDEEEPNEAWEVVRGTPGITGFVGAGMRPVPLSPDEVRHILEVSGLLGKKEAPKAQVAFREGDQVRVVSGPFADFTGTVTEINPERGKVKVMVTIFGRETPVELDFSQVVKA</sequence>
<protein>
    <recommendedName>
        <fullName evidence="1">Transcription termination/antitermination protein NusG</fullName>
    </recommendedName>
</protein>
<accession>P35872</accession>
<accession>Q5SLP5</accession>
<evidence type="ECO:0000255" key="1">
    <source>
        <dbReference type="HAMAP-Rule" id="MF_00948"/>
    </source>
</evidence>
<evidence type="ECO:0000305" key="2"/>
<evidence type="ECO:0007829" key="3">
    <source>
        <dbReference type="PDB" id="1NZ8"/>
    </source>
</evidence>
<evidence type="ECO:0007829" key="4">
    <source>
        <dbReference type="PDB" id="1NZ9"/>
    </source>
</evidence>
<organism>
    <name type="scientific">Thermus thermophilus (strain ATCC 27634 / DSM 579 / HB8)</name>
    <dbReference type="NCBI Taxonomy" id="300852"/>
    <lineage>
        <taxon>Bacteria</taxon>
        <taxon>Thermotogati</taxon>
        <taxon>Deinococcota</taxon>
        <taxon>Deinococci</taxon>
        <taxon>Thermales</taxon>
        <taxon>Thermaceae</taxon>
        <taxon>Thermus</taxon>
    </lineage>
</organism>
<name>NUSG_THET8</name>
<reference key="1">
    <citation type="journal article" date="1992" name="J. Bacteriol.">
        <title>Identification of the gene encoding transcription factor NusG of Thermus thermophilus.</title>
        <authorList>
            <person name="Heinrich T."/>
            <person name="Schroeder W."/>
            <person name="Erdmann V.A."/>
            <person name="Hartmann R.K."/>
        </authorList>
    </citation>
    <scope>NUCLEOTIDE SEQUENCE [GENOMIC DNA]</scope>
    <source>
        <strain>ATCC 27634 / DSM 579 / HB8</strain>
    </source>
</reference>
<reference key="2">
    <citation type="submission" date="2004-11" db="EMBL/GenBank/DDBJ databases">
        <title>Complete genome sequence of Thermus thermophilus HB8.</title>
        <authorList>
            <person name="Masui R."/>
            <person name="Kurokawa K."/>
            <person name="Nakagawa N."/>
            <person name="Tokunaga F."/>
            <person name="Koyama Y."/>
            <person name="Shibata T."/>
            <person name="Oshima T."/>
            <person name="Yokoyama S."/>
            <person name="Yasunaga T."/>
            <person name="Kuramitsu S."/>
        </authorList>
    </citation>
    <scope>NUCLEOTIDE SEQUENCE [LARGE SCALE GENOMIC DNA]</scope>
    <source>
        <strain>ATCC 27634 / DSM 579 / HB8</strain>
    </source>
</reference>
<reference key="3">
    <citation type="journal article" date="2004" name="Proteins">
        <title>Structural and sequence comparisons arising from the solution structure of the transcription elongation factor NusG from Thermus thermophilus.</title>
        <authorList>
            <person name="Reay P."/>
            <person name="Yamasaki K."/>
            <person name="Terada T."/>
            <person name="Kuramitsu S."/>
            <person name="Shirouzu M."/>
            <person name="Yokoyama S."/>
        </authorList>
    </citation>
    <scope>STRUCTURE BY NMR OF 2-120</scope>
</reference>
<dbReference type="EMBL" id="L10348">
    <property type="protein sequence ID" value="AAA27500.1"/>
    <property type="status" value="ALT_INIT"/>
    <property type="molecule type" value="Genomic_DNA"/>
</dbReference>
<dbReference type="EMBL" id="AP008226">
    <property type="protein sequence ID" value="BAD70071.1"/>
    <property type="molecule type" value="Genomic_DNA"/>
</dbReference>
<dbReference type="RefSeq" id="WP_008630512.1">
    <property type="nucleotide sequence ID" value="NC_006461.1"/>
</dbReference>
<dbReference type="RefSeq" id="YP_143514.1">
    <property type="nucleotide sequence ID" value="NC_006461.1"/>
</dbReference>
<dbReference type="PDB" id="1NZ8">
    <property type="method" value="NMR"/>
    <property type="chains" value="A=2-120"/>
</dbReference>
<dbReference type="PDB" id="1NZ9">
    <property type="method" value="NMR"/>
    <property type="chains" value="A=127-184"/>
</dbReference>
<dbReference type="PDBsum" id="1NZ8"/>
<dbReference type="PDBsum" id="1NZ9"/>
<dbReference type="SMR" id="P35872"/>
<dbReference type="EnsemblBacteria" id="BAD70071">
    <property type="protein sequence ID" value="BAD70071"/>
    <property type="gene ID" value="BAD70071"/>
</dbReference>
<dbReference type="GeneID" id="3168047"/>
<dbReference type="KEGG" id="ttj:TTHA0248"/>
<dbReference type="PATRIC" id="fig|300852.9.peg.248"/>
<dbReference type="eggNOG" id="COG0250">
    <property type="taxonomic scope" value="Bacteria"/>
</dbReference>
<dbReference type="HOGENOM" id="CLU_067287_1_1_0"/>
<dbReference type="PhylomeDB" id="P35872"/>
<dbReference type="EvolutionaryTrace" id="P35872"/>
<dbReference type="Proteomes" id="UP000000532">
    <property type="component" value="Chromosome"/>
</dbReference>
<dbReference type="GO" id="GO:0005829">
    <property type="term" value="C:cytosol"/>
    <property type="evidence" value="ECO:0007669"/>
    <property type="project" value="TreeGrafter"/>
</dbReference>
<dbReference type="GO" id="GO:0006353">
    <property type="term" value="P:DNA-templated transcription termination"/>
    <property type="evidence" value="ECO:0007669"/>
    <property type="project" value="UniProtKB-UniRule"/>
</dbReference>
<dbReference type="GO" id="GO:0032784">
    <property type="term" value="P:regulation of DNA-templated transcription elongation"/>
    <property type="evidence" value="ECO:0007669"/>
    <property type="project" value="InterPro"/>
</dbReference>
<dbReference type="GO" id="GO:0031564">
    <property type="term" value="P:transcription antitermination"/>
    <property type="evidence" value="ECO:0007669"/>
    <property type="project" value="UniProtKB-UniRule"/>
</dbReference>
<dbReference type="GO" id="GO:0140673">
    <property type="term" value="P:transcription elongation-coupled chromatin remodeling"/>
    <property type="evidence" value="ECO:0007669"/>
    <property type="project" value="InterPro"/>
</dbReference>
<dbReference type="CDD" id="cd06091">
    <property type="entry name" value="KOW_NusG"/>
    <property type="match status" value="1"/>
</dbReference>
<dbReference type="CDD" id="cd09891">
    <property type="entry name" value="NGN_Bact_1"/>
    <property type="match status" value="1"/>
</dbReference>
<dbReference type="FunFam" id="2.30.30.30:FF:000002">
    <property type="entry name" value="Transcription termination/antitermination factor NusG"/>
    <property type="match status" value="1"/>
</dbReference>
<dbReference type="Gene3D" id="2.30.30.30">
    <property type="match status" value="1"/>
</dbReference>
<dbReference type="Gene3D" id="3.30.70.940">
    <property type="entry name" value="NusG, N-terminal domain"/>
    <property type="match status" value="1"/>
</dbReference>
<dbReference type="HAMAP" id="MF_00948">
    <property type="entry name" value="NusG"/>
    <property type="match status" value="1"/>
</dbReference>
<dbReference type="IDEAL" id="IID90037"/>
<dbReference type="InterPro" id="IPR005824">
    <property type="entry name" value="KOW"/>
</dbReference>
<dbReference type="InterPro" id="IPR047050">
    <property type="entry name" value="NGN"/>
</dbReference>
<dbReference type="InterPro" id="IPR006645">
    <property type="entry name" value="NGN-like_dom"/>
</dbReference>
<dbReference type="InterPro" id="IPR036735">
    <property type="entry name" value="NGN_dom_sf"/>
</dbReference>
<dbReference type="InterPro" id="IPR043425">
    <property type="entry name" value="NusG-like"/>
</dbReference>
<dbReference type="InterPro" id="IPR014722">
    <property type="entry name" value="Rib_uL2_dom2"/>
</dbReference>
<dbReference type="InterPro" id="IPR001062">
    <property type="entry name" value="Transcrpt_antiterm_NusG"/>
</dbReference>
<dbReference type="InterPro" id="IPR015869">
    <property type="entry name" value="Transcrpt_antiterm_NusG_bac_CS"/>
</dbReference>
<dbReference type="InterPro" id="IPR008991">
    <property type="entry name" value="Translation_prot_SH3-like_sf"/>
</dbReference>
<dbReference type="NCBIfam" id="TIGR00922">
    <property type="entry name" value="nusG"/>
    <property type="match status" value="1"/>
</dbReference>
<dbReference type="PANTHER" id="PTHR30265">
    <property type="entry name" value="RHO-INTERACTING TRANSCRIPTION TERMINATION FACTOR NUSG"/>
    <property type="match status" value="1"/>
</dbReference>
<dbReference type="PANTHER" id="PTHR30265:SF2">
    <property type="entry name" value="TRANSCRIPTION TERMINATION_ANTITERMINATION PROTEIN NUSG"/>
    <property type="match status" value="1"/>
</dbReference>
<dbReference type="Pfam" id="PF00467">
    <property type="entry name" value="KOW"/>
    <property type="match status" value="1"/>
</dbReference>
<dbReference type="Pfam" id="PF02357">
    <property type="entry name" value="NusG"/>
    <property type="match status" value="1"/>
</dbReference>
<dbReference type="PRINTS" id="PR00338">
    <property type="entry name" value="NUSGTNSCPFCT"/>
</dbReference>
<dbReference type="SMART" id="SM00739">
    <property type="entry name" value="KOW"/>
    <property type="match status" value="1"/>
</dbReference>
<dbReference type="SMART" id="SM00738">
    <property type="entry name" value="NGN"/>
    <property type="match status" value="1"/>
</dbReference>
<dbReference type="SUPFAM" id="SSF82679">
    <property type="entry name" value="N-utilization substance G protein NusG, N-terminal domain"/>
    <property type="match status" value="1"/>
</dbReference>
<dbReference type="SUPFAM" id="SSF50104">
    <property type="entry name" value="Translation proteins SH3-like domain"/>
    <property type="match status" value="1"/>
</dbReference>
<dbReference type="PROSITE" id="PS01014">
    <property type="entry name" value="NUSG"/>
    <property type="match status" value="1"/>
</dbReference>
<gene>
    <name evidence="1" type="primary">nusG</name>
    <name type="ordered locus">TTHA0248</name>
</gene>
<keyword id="KW-0002">3D-structure</keyword>
<keyword id="KW-1185">Reference proteome</keyword>
<keyword id="KW-0804">Transcription</keyword>
<keyword id="KW-0889">Transcription antitermination</keyword>
<keyword id="KW-0805">Transcription regulation</keyword>
<keyword id="KW-0806">Transcription termination</keyword>
<feature type="chain" id="PRO_0000113966" description="Transcription termination/antitermination protein NusG">
    <location>
        <begin position="1"/>
        <end position="184"/>
    </location>
</feature>
<feature type="domain" description="KOW" evidence="1">
    <location>
        <begin position="133"/>
        <end position="163"/>
    </location>
</feature>
<feature type="strand" evidence="3">
    <location>
        <begin position="4"/>
        <end position="9"/>
    </location>
</feature>
<feature type="turn" evidence="3">
    <location>
        <begin position="12"/>
        <end position="14"/>
    </location>
</feature>
<feature type="helix" evidence="3">
    <location>
        <begin position="15"/>
        <end position="29"/>
    </location>
</feature>
<feature type="turn" evidence="3">
    <location>
        <begin position="32"/>
        <end position="34"/>
    </location>
</feature>
<feature type="strand" evidence="3">
    <location>
        <begin position="37"/>
        <end position="39"/>
    </location>
</feature>
<feature type="strand" evidence="3">
    <location>
        <begin position="41"/>
        <end position="47"/>
    </location>
</feature>
<feature type="strand" evidence="3">
    <location>
        <begin position="50"/>
        <end position="52"/>
    </location>
</feature>
<feature type="strand" evidence="3">
    <location>
        <begin position="55"/>
        <end position="62"/>
    </location>
</feature>
<feature type="strand" evidence="3">
    <location>
        <begin position="65"/>
        <end position="70"/>
    </location>
</feature>
<feature type="strand" evidence="3">
    <location>
        <begin position="74"/>
        <end position="77"/>
    </location>
</feature>
<feature type="helix" evidence="3">
    <location>
        <begin position="80"/>
        <end position="87"/>
    </location>
</feature>
<feature type="strand" evidence="3">
    <location>
        <begin position="97"/>
        <end position="101"/>
    </location>
</feature>
<feature type="helix" evidence="3">
    <location>
        <begin position="106"/>
        <end position="116"/>
    </location>
</feature>
<feature type="strand" evidence="4">
    <location>
        <begin position="136"/>
        <end position="139"/>
    </location>
</feature>
<feature type="helix" evidence="4">
    <location>
        <begin position="142"/>
        <end position="144"/>
    </location>
</feature>
<feature type="strand" evidence="4">
    <location>
        <begin position="148"/>
        <end position="155"/>
    </location>
</feature>
<feature type="turn" evidence="4">
    <location>
        <begin position="156"/>
        <end position="159"/>
    </location>
</feature>
<feature type="strand" evidence="4">
    <location>
        <begin position="160"/>
        <end position="176"/>
    </location>
</feature>
<feature type="helix" evidence="4">
    <location>
        <begin position="178"/>
        <end position="180"/>
    </location>
</feature>
<feature type="strand" evidence="4">
    <location>
        <begin position="181"/>
        <end position="183"/>
    </location>
</feature>
<proteinExistence type="evidence at protein level"/>